<reference key="1">
    <citation type="submission" date="2008-06" db="EMBL/GenBank/DDBJ databases">
        <title>Genome and proteome analysis of A. pleuropneumoniae serotype 7.</title>
        <authorList>
            <person name="Linke B."/>
            <person name="Buettner F."/>
            <person name="Martinez-Arias R."/>
            <person name="Goesmann A."/>
            <person name="Baltes N."/>
            <person name="Tegetmeyer H."/>
            <person name="Singh M."/>
            <person name="Gerlach G.F."/>
        </authorList>
    </citation>
    <scope>NUCLEOTIDE SEQUENCE [LARGE SCALE GENOMIC DNA]</scope>
    <source>
        <strain>AP76</strain>
    </source>
</reference>
<comment type="function">
    <text evidence="1">Pole-localizer protein involved in the regulation of several cellular processes.</text>
</comment>
<comment type="subcellular location">
    <subcellularLocation>
        <location evidence="1">Cytoplasm</location>
    </subcellularLocation>
</comment>
<comment type="similarity">
    <text evidence="1">Belongs to the pole-localizer TmaR family.</text>
</comment>
<accession>B3GXE4</accession>
<feature type="chain" id="PRO_1000131762" description="Pole-localizer protein TmaR">
    <location>
        <begin position="1"/>
        <end position="111"/>
    </location>
</feature>
<feature type="region of interest" description="Disordered" evidence="2">
    <location>
        <begin position="92"/>
        <end position="111"/>
    </location>
</feature>
<feature type="coiled-coil region" evidence="1">
    <location>
        <begin position="70"/>
        <end position="104"/>
    </location>
</feature>
<name>TMAR_ACTP7</name>
<evidence type="ECO:0000255" key="1">
    <source>
        <dbReference type="HAMAP-Rule" id="MF_00683"/>
    </source>
</evidence>
<evidence type="ECO:0000256" key="2">
    <source>
        <dbReference type="SAM" id="MobiDB-lite"/>
    </source>
</evidence>
<keyword id="KW-0175">Coiled coil</keyword>
<keyword id="KW-0963">Cytoplasm</keyword>
<gene>
    <name evidence="1" type="primary">tmaR</name>
    <name type="ordered locus">APP7_0751</name>
</gene>
<sequence length="111" mass="13371">MADVKKQSFQDMLDYVHLYRLKNKLHRETADNDRKIRDNQKRVLLLDNLNQYINDSMTVEDIRAIIANMRDDYENRVDDYMIRNAELSKQRREIRQKMAAHKTAASEKNEK</sequence>
<dbReference type="EMBL" id="CP001091">
    <property type="protein sequence ID" value="ACE61403.1"/>
    <property type="molecule type" value="Genomic_DNA"/>
</dbReference>
<dbReference type="RefSeq" id="WP_005611986.1">
    <property type="nucleotide sequence ID" value="NC_010939.1"/>
</dbReference>
<dbReference type="SMR" id="B3GXE4"/>
<dbReference type="KEGG" id="apa:APP7_0751"/>
<dbReference type="HOGENOM" id="CLU_153146_0_0_6"/>
<dbReference type="Proteomes" id="UP000001226">
    <property type="component" value="Chromosome"/>
</dbReference>
<dbReference type="GO" id="GO:0005829">
    <property type="term" value="C:cytosol"/>
    <property type="evidence" value="ECO:0007669"/>
    <property type="project" value="TreeGrafter"/>
</dbReference>
<dbReference type="HAMAP" id="MF_00683">
    <property type="entry name" value="Pole_loc_TmaR"/>
    <property type="match status" value="1"/>
</dbReference>
<dbReference type="InterPro" id="IPR007458">
    <property type="entry name" value="DUF496"/>
</dbReference>
<dbReference type="NCBIfam" id="NF003844">
    <property type="entry name" value="PRK05423.1"/>
    <property type="match status" value="1"/>
</dbReference>
<dbReference type="PANTHER" id="PTHR39591">
    <property type="entry name" value="UPF0265 PROTEIN YEEX"/>
    <property type="match status" value="1"/>
</dbReference>
<dbReference type="PANTHER" id="PTHR39591:SF1">
    <property type="entry name" value="UPF0265 PROTEIN YEEX"/>
    <property type="match status" value="1"/>
</dbReference>
<dbReference type="Pfam" id="PF04363">
    <property type="entry name" value="DUF496"/>
    <property type="match status" value="1"/>
</dbReference>
<dbReference type="PIRSF" id="PIRSF028773">
    <property type="entry name" value="UCP028773"/>
    <property type="match status" value="1"/>
</dbReference>
<proteinExistence type="inferred from homology"/>
<protein>
    <recommendedName>
        <fullName evidence="1">Pole-localizer protein TmaR</fullName>
    </recommendedName>
</protein>
<organism>
    <name type="scientific">Actinobacillus pleuropneumoniae serotype 7 (strain AP76)</name>
    <dbReference type="NCBI Taxonomy" id="537457"/>
    <lineage>
        <taxon>Bacteria</taxon>
        <taxon>Pseudomonadati</taxon>
        <taxon>Pseudomonadota</taxon>
        <taxon>Gammaproteobacteria</taxon>
        <taxon>Pasteurellales</taxon>
        <taxon>Pasteurellaceae</taxon>
        <taxon>Actinobacillus</taxon>
    </lineage>
</organism>